<name>RARAB_DANRE</name>
<reference evidence="9 10" key="1">
    <citation type="submission" date="1992-12" db="EMBL/GenBank/DDBJ databases">
        <title>The molecular characterization of three zebrafish retinoic acid receptor genes suggests the retinoic acid pathway functions in embryonic hindbrain development.</title>
        <authorList>
            <person name="Stachel S.E."/>
            <person name="Kushner P."/>
        </authorList>
    </citation>
    <scope>NUCLEOTIDE SEQUENCE [MRNA]</scope>
    <source>
        <tissue evidence="10">Gastrula</tissue>
    </source>
</reference>
<reference evidence="9 10" key="2">
    <citation type="submission" date="2003-03" db="EMBL/GenBank/DDBJ databases">
        <authorList>
            <consortium name="NIH - Zebrafish Gene Collection (ZGC) project"/>
        </authorList>
    </citation>
    <scope>NUCLEOTIDE SEQUENCE [LARGE SCALE MRNA]</scope>
    <source>
        <strain>SJD</strain>
    </source>
</reference>
<reference evidence="9" key="3">
    <citation type="journal article" date="2006" name="Gene Expr. Patterns">
        <title>Characterization of the retinoic acid receptor genes raraa, rarab and rarg during zebrafish development.</title>
        <authorList>
            <person name="Hale L.A."/>
            <person name="Tallafuss A."/>
            <person name="Yan Y.-L."/>
            <person name="Dudley L."/>
            <person name="Eisen J.S."/>
            <person name="Postlethwait J.H."/>
        </authorList>
    </citation>
    <scope>DEVELOPMENTAL STAGE</scope>
    <scope>TISSUE SPECIFICITY</scope>
</reference>
<reference key="4">
    <citation type="journal article" date="2009" name="Dev. Biol.">
        <title>Combinatorial roles for zebrafish retinoic acid receptors in the hindbrain, limbs and pharyngeal arches.</title>
        <authorList>
            <person name="Linville A."/>
            <person name="Radtke K."/>
            <person name="Waxman J.S."/>
            <person name="Yelon D."/>
            <person name="Schilling T.F."/>
        </authorList>
    </citation>
    <scope>DEVELOPMENTAL STAGE</scope>
    <scope>INDUCTION</scope>
    <scope>FUNCTION</scope>
</reference>
<accession>Q7ZTI3</accession>
<accession>Q90272</accession>
<evidence type="ECO:0000250" key="1"/>
<evidence type="ECO:0000250" key="2">
    <source>
        <dbReference type="UniProtKB" id="P10276"/>
    </source>
</evidence>
<evidence type="ECO:0000255" key="3"/>
<evidence type="ECO:0000255" key="4">
    <source>
        <dbReference type="PROSITE-ProRule" id="PRU00407"/>
    </source>
</evidence>
<evidence type="ECO:0000255" key="5">
    <source>
        <dbReference type="PROSITE-ProRule" id="PRU01189"/>
    </source>
</evidence>
<evidence type="ECO:0000256" key="6">
    <source>
        <dbReference type="SAM" id="MobiDB-lite"/>
    </source>
</evidence>
<evidence type="ECO:0000269" key="7">
    <source>
    </source>
</evidence>
<evidence type="ECO:0000269" key="8">
    <source>
    </source>
</evidence>
<evidence type="ECO:0000305" key="9"/>
<evidence type="ECO:0000312" key="10">
    <source>
        <dbReference type="EMBL" id="AAA50050.1"/>
    </source>
</evidence>
<evidence type="ECO:0000312" key="11">
    <source>
        <dbReference type="ZFIN" id="ZDB-GENE-980526-72"/>
    </source>
</evidence>
<comment type="function">
    <text evidence="1 8">Receptor for retinoic acid. Retinoic acid receptors bind as heterodimers to their target response elements in response to their ligands, all-trans or 9-cis retinoic acid, and regulate gene expression in various biological processes. The rar/rxr heterodimers bind to the retinoic acid response elements (RARE) composed of tandem 5'-AGGTCA-3' sites known as DR1-DR5 (By similarity). Required for hindbrain development and, in lateral plate mesoderm, for specification of the pectoral fins.</text>
</comment>
<comment type="subunit">
    <text evidence="1">Heterodimer; with an rxr molecule. Binds DNA preferentially as a rar/rxr heterodimer.</text>
</comment>
<comment type="subcellular location">
    <subcellularLocation>
        <location evidence="4">Nucleus</location>
    </subcellularLocation>
</comment>
<comment type="tissue specificity">
    <text evidence="7">In the embryo, zygotic expression largely overlaps that of raraa, with high levels in hindbrain, lateral plate mesoderm (LPM) and tail bud, but in later stages rarab is expressed more broadly in the brain, pectoral fin bud and pharyngeal arches.</text>
</comment>
<comment type="developmental stage">
    <text evidence="7 8">Expressed both maternally and zygotically. At 9 hpf, expressed in the dorsal epiblast and prospective tail regions, but absent from the ventral epiblast. At 10 hpf, expressed in presumptive diencephalon and hindbrain, in tissue lateral to the head, the posterior neural plate, tail bud and adjacent mesoderm. At 11-15 hpf, restricted expression along the A-P axis of the neural plate up to the rhobomere 1/2 boundary. During somitogenesis, head and tail expression remains. At 18 hpf, retained expression in the neural tube. At 24 hpf, low levels of ubiquitous expression with stronger expression in eyes, hindbrain and spinal cord; in hindbrain the anterior border is at rhombomeres 3-4. Also expressed in non-neural tissues including pharyngeal endoderm, mesenchyme and tail bud. At 48 hpf, expression is maintained in hindbrain, eyes, diencephalon and the pharyngeal region, and is also observed in forebrain, midbrain and pectoral fin bud.</text>
</comment>
<comment type="induction">
    <text evidence="8">Induced by retinoic acid.</text>
</comment>
<comment type="domain">
    <text>Composed of three domains: a modulating N-terminal domain, a DNA-binding domain and a C-terminal ligand-binding domain.</text>
</comment>
<comment type="domain">
    <text evidence="2">The 9aaTAD motif is a transactivation domain present in a large number of yeast and animal transcription factors.</text>
</comment>
<comment type="similarity">
    <text evidence="3">Belongs to the nuclear hormone receptor family. NR1 subfamily.</text>
</comment>
<feature type="chain" id="PRO_0000262963" description="Retinoic acid receptor alpha-B">
    <location>
        <begin position="1"/>
        <end position="458"/>
    </location>
</feature>
<feature type="domain" description="NR LBD" evidence="5">
    <location>
        <begin position="178"/>
        <end position="412"/>
    </location>
</feature>
<feature type="DNA-binding region" description="Nuclear receptor" evidence="4">
    <location>
        <begin position="80"/>
        <end position="155"/>
    </location>
</feature>
<feature type="zinc finger region" description="NR C4-type" evidence="4">
    <location>
        <begin position="83"/>
        <end position="103"/>
    </location>
</feature>
<feature type="zinc finger region" description="NR C4-type" evidence="4">
    <location>
        <begin position="119"/>
        <end position="138"/>
    </location>
</feature>
<feature type="region of interest" description="Modulating" evidence="3">
    <location>
        <begin position="1"/>
        <end position="79"/>
    </location>
</feature>
<feature type="region of interest" description="Disordered" evidence="6">
    <location>
        <begin position="48"/>
        <end position="75"/>
    </location>
</feature>
<feature type="region of interest" description="Hinge" evidence="3">
    <location>
        <begin position="156"/>
        <end position="177"/>
    </location>
</feature>
<feature type="region of interest" description="Disordered" evidence="6">
    <location>
        <begin position="411"/>
        <end position="458"/>
    </location>
</feature>
<feature type="short sequence motif" description="9aaTAD" evidence="2">
    <location>
        <begin position="403"/>
        <end position="411"/>
    </location>
</feature>
<feature type="compositionally biased region" description="Polar residues" evidence="6">
    <location>
        <begin position="49"/>
        <end position="64"/>
    </location>
</feature>
<feature type="compositionally biased region" description="Gly residues" evidence="6">
    <location>
        <begin position="415"/>
        <end position="435"/>
    </location>
</feature>
<feature type="compositionally biased region" description="Low complexity" evidence="6">
    <location>
        <begin position="436"/>
        <end position="458"/>
    </location>
</feature>
<feature type="sequence conflict" description="In Ref. 1; AAA50050." evidence="9" ref="1">
    <original>S</original>
    <variation>T</variation>
    <location>
        <position position="110"/>
    </location>
</feature>
<feature type="sequence conflict" description="In Ref. 1; AAA50050." evidence="9" ref="1">
    <location>
        <position position="424"/>
    </location>
</feature>
<gene>
    <name evidence="11" type="primary">rarab</name>
    <name type="synonym">nr1b1b</name>
    <name evidence="11" type="synonym">rara2b</name>
</gene>
<sequence>MYESVDVVGLTPSPNPFLSMDYYHQNRGCLIPDKGLVSGAARGFRNPHWSGSNHSVETQSTSSEEIVPSPPSPPPPPRVYKPCFVCQDKSSGYHYGVSACEGCKGFFRRSIQKNMVYTCHREKSCIINKVTRNRCQYCRLQKCLEVGMSKESVRNDRNKRKKDDKKQECLENYVLSPDTEKMIEQVRKAHQETFPSLCQLGKYTTNNSADHRVALDVDLWDKFSELSTKCIIKTVEFAKQLPGFTTLTIADQITLLKAACLDILILRICTRYTPDQDTMTFSDGLTLNRTQMHNAGFGPLTDLVFAFANQLLPLEMDDAETGLLSAICLLCGDRQDLEQSDKVDELQEPLLEALKIYVRNRRPHKPHMFPKMLMKITDLRSISAKGAERVITLKMEIPGSMPPLIQEMLENSEGLEGGGSKGAGGGGGGGGGKGAPPGSCSPSLSPSSAHSSPSAHSP</sequence>
<proteinExistence type="evidence at transcript level"/>
<dbReference type="EMBL" id="L03399">
    <property type="protein sequence ID" value="AAA50050.1"/>
    <property type="molecule type" value="mRNA"/>
</dbReference>
<dbReference type="EMBL" id="BC049301">
    <property type="protein sequence ID" value="AAH49301.1"/>
    <property type="molecule type" value="mRNA"/>
</dbReference>
<dbReference type="RefSeq" id="NP_571474.1">
    <property type="nucleotide sequence ID" value="NM_131399.1"/>
</dbReference>
<dbReference type="SMR" id="Q7ZTI3"/>
<dbReference type="FunCoup" id="Q7ZTI3">
    <property type="interactions" value="579"/>
</dbReference>
<dbReference type="STRING" id="7955.ENSDARP00000044676"/>
<dbReference type="PaxDb" id="7955-ENSDARP00000111644"/>
<dbReference type="Ensembl" id="ENSDART00000044677">
    <property type="protein sequence ID" value="ENSDARP00000044676"/>
    <property type="gene ID" value="ENSDARG00000034893"/>
</dbReference>
<dbReference type="Ensembl" id="ENSDART00000189058">
    <property type="protein sequence ID" value="ENSDARP00000146437"/>
    <property type="gene ID" value="ENSDARG00000111757"/>
</dbReference>
<dbReference type="GeneID" id="555364"/>
<dbReference type="KEGG" id="dre:555364"/>
<dbReference type="AGR" id="ZFIN:ZDB-GENE-980526-72"/>
<dbReference type="CTD" id="555364"/>
<dbReference type="ZFIN" id="ZDB-GENE-980526-72">
    <property type="gene designation" value="rarab"/>
</dbReference>
<dbReference type="eggNOG" id="KOG3575">
    <property type="taxonomic scope" value="Eukaryota"/>
</dbReference>
<dbReference type="InParanoid" id="Q7ZTI3"/>
<dbReference type="OrthoDB" id="6081310at2759"/>
<dbReference type="PhylomeDB" id="Q7ZTI3"/>
<dbReference type="TreeFam" id="TF328382"/>
<dbReference type="Reactome" id="R-DRE-5362517">
    <property type="pathway name" value="Signaling by Retinoic Acid"/>
</dbReference>
<dbReference type="SignaLink" id="Q7ZTI3"/>
<dbReference type="PRO" id="PR:Q7ZTI3"/>
<dbReference type="Proteomes" id="UP000000437">
    <property type="component" value="Alternate scaffold 3"/>
</dbReference>
<dbReference type="Proteomes" id="UP000000437">
    <property type="component" value="Chromosome 3"/>
</dbReference>
<dbReference type="Bgee" id="ENSDARG00000034893">
    <property type="expression patterns" value="Expressed in ovary and 27 other cell types or tissues"/>
</dbReference>
<dbReference type="ExpressionAtlas" id="Q7ZTI3">
    <property type="expression patterns" value="baseline"/>
</dbReference>
<dbReference type="GO" id="GO:0005634">
    <property type="term" value="C:nucleus"/>
    <property type="evidence" value="ECO:0000318"/>
    <property type="project" value="GO_Central"/>
</dbReference>
<dbReference type="GO" id="GO:0001227">
    <property type="term" value="F:DNA-binding transcription repressor activity, RNA polymerase II-specific"/>
    <property type="evidence" value="ECO:0000314"/>
    <property type="project" value="ZFIN"/>
</dbReference>
<dbReference type="GO" id="GO:0004879">
    <property type="term" value="F:nuclear receptor activity"/>
    <property type="evidence" value="ECO:0000318"/>
    <property type="project" value="GO_Central"/>
</dbReference>
<dbReference type="GO" id="GO:0000978">
    <property type="term" value="F:RNA polymerase II cis-regulatory region sequence-specific DNA binding"/>
    <property type="evidence" value="ECO:0000314"/>
    <property type="project" value="ZFIN"/>
</dbReference>
<dbReference type="GO" id="GO:0008270">
    <property type="term" value="F:zinc ion binding"/>
    <property type="evidence" value="ECO:0007669"/>
    <property type="project" value="UniProtKB-KW"/>
</dbReference>
<dbReference type="GO" id="GO:0030154">
    <property type="term" value="P:cell differentiation"/>
    <property type="evidence" value="ECO:0000318"/>
    <property type="project" value="GO_Central"/>
</dbReference>
<dbReference type="GO" id="GO:0007507">
    <property type="term" value="P:heart development"/>
    <property type="evidence" value="ECO:0000315"/>
    <property type="project" value="ZFIN"/>
</dbReference>
<dbReference type="GO" id="GO:0001889">
    <property type="term" value="P:liver development"/>
    <property type="evidence" value="ECO:0000315"/>
    <property type="project" value="ZFIN"/>
</dbReference>
<dbReference type="GO" id="GO:0030917">
    <property type="term" value="P:midbrain-hindbrain boundary development"/>
    <property type="evidence" value="ECO:0000316"/>
    <property type="project" value="ZFIN"/>
</dbReference>
<dbReference type="GO" id="GO:0000122">
    <property type="term" value="P:negative regulation of transcription by RNA polymerase II"/>
    <property type="evidence" value="ECO:0000314"/>
    <property type="project" value="ZFIN"/>
</dbReference>
<dbReference type="GO" id="GO:0033339">
    <property type="term" value="P:pectoral fin development"/>
    <property type="evidence" value="ECO:0000314"/>
    <property type="project" value="UniProtKB"/>
</dbReference>
<dbReference type="GO" id="GO:0045944">
    <property type="term" value="P:positive regulation of transcription by RNA polymerase II"/>
    <property type="evidence" value="ECO:0000318"/>
    <property type="project" value="GO_Central"/>
</dbReference>
<dbReference type="GO" id="GO:0048384">
    <property type="term" value="P:retinoic acid receptor signaling pathway"/>
    <property type="evidence" value="ECO:0000318"/>
    <property type="project" value="GO_Central"/>
</dbReference>
<dbReference type="GO" id="GO:0003139">
    <property type="term" value="P:secondary heart field specification"/>
    <property type="evidence" value="ECO:0000315"/>
    <property type="project" value="ZFIN"/>
</dbReference>
<dbReference type="CDD" id="cd06964">
    <property type="entry name" value="NR_DBD_RAR"/>
    <property type="match status" value="1"/>
</dbReference>
<dbReference type="CDD" id="cd06937">
    <property type="entry name" value="NR_LBD_RAR"/>
    <property type="match status" value="1"/>
</dbReference>
<dbReference type="FunFam" id="1.10.565.10:FF:000073">
    <property type="entry name" value="Retinoic acid receptor beta"/>
    <property type="match status" value="1"/>
</dbReference>
<dbReference type="FunFam" id="3.30.50.10:FF:000004">
    <property type="entry name" value="Retinoic acid receptor beta isoform"/>
    <property type="match status" value="1"/>
</dbReference>
<dbReference type="Gene3D" id="3.30.50.10">
    <property type="entry name" value="Erythroid Transcription Factor GATA-1, subunit A"/>
    <property type="match status" value="1"/>
</dbReference>
<dbReference type="Gene3D" id="1.10.565.10">
    <property type="entry name" value="Retinoid X Receptor"/>
    <property type="match status" value="1"/>
</dbReference>
<dbReference type="InterPro" id="IPR035500">
    <property type="entry name" value="NHR-like_dom_sf"/>
</dbReference>
<dbReference type="InterPro" id="IPR047159">
    <property type="entry name" value="NR_DBD_RAR"/>
</dbReference>
<dbReference type="InterPro" id="IPR047158">
    <property type="entry name" value="NR_LBD_RAR"/>
</dbReference>
<dbReference type="InterPro" id="IPR000536">
    <property type="entry name" value="Nucl_hrmn_rcpt_lig-bd"/>
</dbReference>
<dbReference type="InterPro" id="IPR001723">
    <property type="entry name" value="Nuclear_hrmn_rcpt"/>
</dbReference>
<dbReference type="InterPro" id="IPR003078">
    <property type="entry name" value="Retinoic_acid_rcpt"/>
</dbReference>
<dbReference type="InterPro" id="IPR001628">
    <property type="entry name" value="Znf_hrmn_rcpt"/>
</dbReference>
<dbReference type="InterPro" id="IPR013088">
    <property type="entry name" value="Znf_NHR/GATA"/>
</dbReference>
<dbReference type="PANTHER" id="PTHR24085">
    <property type="entry name" value="NUCLEAR HORMONE RECEPTOR"/>
    <property type="match status" value="1"/>
</dbReference>
<dbReference type="PANTHER" id="PTHR24085:SF8">
    <property type="entry name" value="RETINOIC ACID RECEPTOR ALPHA"/>
    <property type="match status" value="1"/>
</dbReference>
<dbReference type="Pfam" id="PF00104">
    <property type="entry name" value="Hormone_recep"/>
    <property type="match status" value="1"/>
</dbReference>
<dbReference type="Pfam" id="PF00105">
    <property type="entry name" value="zf-C4"/>
    <property type="match status" value="1"/>
</dbReference>
<dbReference type="PRINTS" id="PR01292">
    <property type="entry name" value="RETNOICACIDR"/>
</dbReference>
<dbReference type="PRINTS" id="PR00398">
    <property type="entry name" value="STRDHORMONER"/>
</dbReference>
<dbReference type="PRINTS" id="PR00047">
    <property type="entry name" value="STROIDFINGER"/>
</dbReference>
<dbReference type="SMART" id="SM00430">
    <property type="entry name" value="HOLI"/>
    <property type="match status" value="1"/>
</dbReference>
<dbReference type="SMART" id="SM00399">
    <property type="entry name" value="ZnF_C4"/>
    <property type="match status" value="1"/>
</dbReference>
<dbReference type="SUPFAM" id="SSF57716">
    <property type="entry name" value="Glucocorticoid receptor-like (DNA-binding domain)"/>
    <property type="match status" value="1"/>
</dbReference>
<dbReference type="SUPFAM" id="SSF48508">
    <property type="entry name" value="Nuclear receptor ligand-binding domain"/>
    <property type="match status" value="1"/>
</dbReference>
<dbReference type="PROSITE" id="PS51843">
    <property type="entry name" value="NR_LBD"/>
    <property type="match status" value="1"/>
</dbReference>
<dbReference type="PROSITE" id="PS00031">
    <property type="entry name" value="NUCLEAR_REC_DBD_1"/>
    <property type="match status" value="1"/>
</dbReference>
<dbReference type="PROSITE" id="PS51030">
    <property type="entry name" value="NUCLEAR_REC_DBD_2"/>
    <property type="match status" value="1"/>
</dbReference>
<organism>
    <name type="scientific">Danio rerio</name>
    <name type="common">Zebrafish</name>
    <name type="synonym">Brachydanio rerio</name>
    <dbReference type="NCBI Taxonomy" id="7955"/>
    <lineage>
        <taxon>Eukaryota</taxon>
        <taxon>Metazoa</taxon>
        <taxon>Chordata</taxon>
        <taxon>Craniata</taxon>
        <taxon>Vertebrata</taxon>
        <taxon>Euteleostomi</taxon>
        <taxon>Actinopterygii</taxon>
        <taxon>Neopterygii</taxon>
        <taxon>Teleostei</taxon>
        <taxon>Ostariophysi</taxon>
        <taxon>Cypriniformes</taxon>
        <taxon>Danionidae</taxon>
        <taxon>Danioninae</taxon>
        <taxon>Danio</taxon>
    </lineage>
</organism>
<protein>
    <recommendedName>
        <fullName>Retinoic acid receptor alpha-B</fullName>
        <shortName>RAR-alpha-B</shortName>
    </recommendedName>
    <alternativeName>
        <fullName>Nuclear receptor subfamily 1 group B member 1-B</fullName>
    </alternativeName>
    <alternativeName>
        <fullName>Retinoic acid receptor alpha-2.B</fullName>
        <shortName>RAR-alpha-2.B</shortName>
    </alternativeName>
</protein>
<keyword id="KW-0238">DNA-binding</keyword>
<keyword id="KW-0479">Metal-binding</keyword>
<keyword id="KW-0539">Nucleus</keyword>
<keyword id="KW-0675">Receptor</keyword>
<keyword id="KW-1185">Reference proteome</keyword>
<keyword id="KW-0804">Transcription</keyword>
<keyword id="KW-0805">Transcription regulation</keyword>
<keyword id="KW-0862">Zinc</keyword>
<keyword id="KW-0863">Zinc-finger</keyword>